<reference key="1">
    <citation type="journal article" date="2004" name="Science">
        <title>The Ashbya gossypii genome as a tool for mapping the ancient Saccharomyces cerevisiae genome.</title>
        <authorList>
            <person name="Dietrich F.S."/>
            <person name="Voegeli S."/>
            <person name="Brachat S."/>
            <person name="Lerch A."/>
            <person name="Gates K."/>
            <person name="Steiner S."/>
            <person name="Mohr C."/>
            <person name="Poehlmann R."/>
            <person name="Luedi P."/>
            <person name="Choi S."/>
            <person name="Wing R.A."/>
            <person name="Flavier A."/>
            <person name="Gaffney T.D."/>
            <person name="Philippsen P."/>
        </authorList>
    </citation>
    <scope>NUCLEOTIDE SEQUENCE [LARGE SCALE GENOMIC DNA]</scope>
    <source>
        <strain>ATCC 10895 / CBS 109.51 / FGSC 9923 / NRRL Y-1056</strain>
    </source>
</reference>
<reference key="2">
    <citation type="journal article" date="2013" name="G3 (Bethesda)">
        <title>Genomes of Ashbya fungi isolated from insects reveal four mating-type loci, numerous translocations, lack of transposons, and distinct gene duplications.</title>
        <authorList>
            <person name="Dietrich F.S."/>
            <person name="Voegeli S."/>
            <person name="Kuo S."/>
            <person name="Philippsen P."/>
        </authorList>
    </citation>
    <scope>GENOME REANNOTATION</scope>
    <scope>SEQUENCE REVISION TO 236</scope>
    <source>
        <strain>ATCC 10895 / CBS 109.51 / FGSC 9923 / NRRL Y-1056</strain>
    </source>
</reference>
<accession>Q757H2</accession>
<protein>
    <recommendedName>
        <fullName>Phosphatidylinositol transfer protein CSR1</fullName>
    </recommendedName>
</protein>
<keyword id="KW-0963">Cytoplasm</keyword>
<keyword id="KW-0967">Endosome</keyword>
<keyword id="KW-0442">Lipid degradation</keyword>
<keyword id="KW-0443">Lipid metabolism</keyword>
<keyword id="KW-0445">Lipid transport</keyword>
<keyword id="KW-0595">Phospholipid degradation</keyword>
<keyword id="KW-1208">Phospholipid metabolism</keyword>
<keyword id="KW-1185">Reference proteome</keyword>
<keyword id="KW-0813">Transport</keyword>
<gene>
    <name type="primary">CSR1</name>
    <name type="ordered locus">AER041W</name>
</gene>
<feature type="chain" id="PRO_0000228154" description="Phosphatidylinositol transfer protein CSR1">
    <location>
        <begin position="1"/>
        <end position="436"/>
    </location>
</feature>
<feature type="domain" description="CRAL-TRIO" evidence="2">
    <location>
        <begin position="188"/>
        <end position="347"/>
    </location>
</feature>
<feature type="region of interest" description="Disordered" evidence="3">
    <location>
        <begin position="85"/>
        <end position="104"/>
    </location>
</feature>
<feature type="compositionally biased region" description="Basic and acidic residues" evidence="3">
    <location>
        <begin position="86"/>
        <end position="102"/>
    </location>
</feature>
<dbReference type="EMBL" id="AE016818">
    <property type="protein sequence ID" value="AAS52725.2"/>
    <property type="molecule type" value="Genomic_DNA"/>
</dbReference>
<dbReference type="RefSeq" id="NP_984901.2">
    <property type="nucleotide sequence ID" value="NM_210255.2"/>
</dbReference>
<dbReference type="SMR" id="Q757H2"/>
<dbReference type="FunCoup" id="Q757H2">
    <property type="interactions" value="210"/>
</dbReference>
<dbReference type="STRING" id="284811.Q757H2"/>
<dbReference type="EnsemblFungi" id="AAS52725">
    <property type="protein sequence ID" value="AAS52725"/>
    <property type="gene ID" value="AGOS_AER041W"/>
</dbReference>
<dbReference type="GeneID" id="4621103"/>
<dbReference type="KEGG" id="ago:AGOS_AER041W"/>
<dbReference type="eggNOG" id="KOG1470">
    <property type="taxonomic scope" value="Eukaryota"/>
</dbReference>
<dbReference type="HOGENOM" id="CLU_016665_3_0_1"/>
<dbReference type="InParanoid" id="Q757H2"/>
<dbReference type="OMA" id="ISTMRWR"/>
<dbReference type="OrthoDB" id="43460at2759"/>
<dbReference type="Proteomes" id="UP000000591">
    <property type="component" value="Chromosome V"/>
</dbReference>
<dbReference type="GO" id="GO:0005829">
    <property type="term" value="C:cytosol"/>
    <property type="evidence" value="ECO:0007669"/>
    <property type="project" value="EnsemblFungi"/>
</dbReference>
<dbReference type="GO" id="GO:0005768">
    <property type="term" value="C:endosome"/>
    <property type="evidence" value="ECO:0007669"/>
    <property type="project" value="UniProtKB-SubCell"/>
</dbReference>
<dbReference type="GO" id="GO:0005811">
    <property type="term" value="C:lipid droplet"/>
    <property type="evidence" value="ECO:0007669"/>
    <property type="project" value="EnsemblFungi"/>
</dbReference>
<dbReference type="GO" id="GO:0008526">
    <property type="term" value="F:phosphatidylinositol transfer activity"/>
    <property type="evidence" value="ECO:0000318"/>
    <property type="project" value="GO_Central"/>
</dbReference>
<dbReference type="GO" id="GO:0043001">
    <property type="term" value="P:Golgi to plasma membrane protein transport"/>
    <property type="evidence" value="ECO:0007669"/>
    <property type="project" value="EnsemblFungi"/>
</dbReference>
<dbReference type="GO" id="GO:0045717">
    <property type="term" value="P:negative regulation of fatty acid biosynthetic process"/>
    <property type="evidence" value="ECO:0007669"/>
    <property type="project" value="EnsemblFungi"/>
</dbReference>
<dbReference type="GO" id="GO:1901352">
    <property type="term" value="P:negative regulation of phosphatidylglycerol biosynthetic process"/>
    <property type="evidence" value="ECO:0007669"/>
    <property type="project" value="EnsemblFungi"/>
</dbReference>
<dbReference type="GO" id="GO:0046488">
    <property type="term" value="P:phosphatidylinositol metabolic process"/>
    <property type="evidence" value="ECO:0007669"/>
    <property type="project" value="EnsemblFungi"/>
</dbReference>
<dbReference type="GO" id="GO:0009395">
    <property type="term" value="P:phospholipid catabolic process"/>
    <property type="evidence" value="ECO:0007669"/>
    <property type="project" value="UniProtKB-KW"/>
</dbReference>
<dbReference type="GO" id="GO:0015914">
    <property type="term" value="P:phospholipid transport"/>
    <property type="evidence" value="ECO:0000318"/>
    <property type="project" value="GO_Central"/>
</dbReference>
<dbReference type="GO" id="GO:2001247">
    <property type="term" value="P:positive regulation of phosphatidylcholine biosynthetic process"/>
    <property type="evidence" value="ECO:0007669"/>
    <property type="project" value="EnsemblFungi"/>
</dbReference>
<dbReference type="CDD" id="cd00170">
    <property type="entry name" value="SEC14"/>
    <property type="match status" value="1"/>
</dbReference>
<dbReference type="Gene3D" id="3.40.525.10">
    <property type="entry name" value="CRAL-TRIO lipid binding domain"/>
    <property type="match status" value="1"/>
</dbReference>
<dbReference type="InterPro" id="IPR001251">
    <property type="entry name" value="CRAL-TRIO_dom"/>
</dbReference>
<dbReference type="InterPro" id="IPR036865">
    <property type="entry name" value="CRAL-TRIO_dom_sf"/>
</dbReference>
<dbReference type="InterPro" id="IPR011074">
    <property type="entry name" value="CRAL/TRIO_N_dom"/>
</dbReference>
<dbReference type="InterPro" id="IPR036273">
    <property type="entry name" value="CRAL/TRIO_N_dom_sf"/>
</dbReference>
<dbReference type="InterPro" id="IPR052432">
    <property type="entry name" value="PITP/CRAL-TRIO"/>
</dbReference>
<dbReference type="PANTHER" id="PTHR46590:SF1">
    <property type="entry name" value="PHOSPHATIDYLINOSITOL TRANSFER PROTEIN CSR1"/>
    <property type="match status" value="1"/>
</dbReference>
<dbReference type="PANTHER" id="PTHR46590">
    <property type="entry name" value="PHOSPHATIDYLINOSITOL TRANSFER PROTEIN CSR1-RELATED"/>
    <property type="match status" value="1"/>
</dbReference>
<dbReference type="Pfam" id="PF00650">
    <property type="entry name" value="CRAL_TRIO"/>
    <property type="match status" value="1"/>
</dbReference>
<dbReference type="Pfam" id="PF03765">
    <property type="entry name" value="CRAL_TRIO_N"/>
    <property type="match status" value="1"/>
</dbReference>
<dbReference type="SMART" id="SM01100">
    <property type="entry name" value="CRAL_TRIO_N"/>
    <property type="match status" value="1"/>
</dbReference>
<dbReference type="SMART" id="SM00516">
    <property type="entry name" value="SEC14"/>
    <property type="match status" value="1"/>
</dbReference>
<dbReference type="SUPFAM" id="SSF52087">
    <property type="entry name" value="CRAL/TRIO domain"/>
    <property type="match status" value="1"/>
</dbReference>
<dbReference type="SUPFAM" id="SSF46938">
    <property type="entry name" value="CRAL/TRIO N-terminal domain"/>
    <property type="match status" value="1"/>
</dbReference>
<dbReference type="PROSITE" id="PS50191">
    <property type="entry name" value="CRAL_TRIO"/>
    <property type="match status" value="1"/>
</dbReference>
<sequence length="436" mass="49149">MTQTAAPGRVQTLTKEQEKVLKQVWVHLFQFWGIDVDGSAVLTAKEPEPAAPSGKGRKLLGLFGKRKDATGAARKESNGKAAAKVYDAEKVEDSDAEKEKPTPQKVEGLEEMYELLKELDGAAVSKEFWSMLRCDYPDNLLLRFVRARKWDINKAMIMMAHSLRWRLNEGKPEDIVFGGERGAQKADKKGIVKQLELGKATVRGFDKNGCPIVYVRPRLHHAADQTEAETSEYSLLIIEQARLFLKEPCDTATILFDLSGFSMANMDYAPVKFLITCFEAHYPECLGKLFIHKAPWIFPPIWNIIKNWLDPVVAAKIAFTKTAADLEEFIPAEQIPLELGGKDEYNFDGFVMPDGSADTKLSDEKGKAAVLEEREAIIKRFIDATISWIESTSDEESAKWLEKKIDLSKELSENYSKLDPYIRSRSFYDVNGTLKV</sequence>
<comment type="function">
    <text evidence="1">Non-classical phosphatidylinositol (PtdIns) transfer protein (PITP), which exhibits PtdIns-binding/transfer activity in the absence of detectable PtdCho-binding/transfer activity. May also regulate post-Golgi membrane-trafficking events and have a role resistance to oxidative stress (By similarity).</text>
</comment>
<comment type="subunit">
    <text evidence="1">Binds phosphatidylinositol (PtdIns).</text>
</comment>
<comment type="subcellular location">
    <subcellularLocation>
        <location evidence="1">Cytoplasm</location>
    </subcellularLocation>
    <subcellularLocation>
        <location evidence="1">Endosome</location>
    </subcellularLocation>
</comment>
<comment type="similarity">
    <text evidence="4">Belongs to the PITP family.</text>
</comment>
<evidence type="ECO:0000250" key="1"/>
<evidence type="ECO:0000255" key="2">
    <source>
        <dbReference type="PROSITE-ProRule" id="PRU00056"/>
    </source>
</evidence>
<evidence type="ECO:0000256" key="3">
    <source>
        <dbReference type="SAM" id="MobiDB-lite"/>
    </source>
</evidence>
<evidence type="ECO:0000305" key="4"/>
<organism>
    <name type="scientific">Eremothecium gossypii (strain ATCC 10895 / CBS 109.51 / FGSC 9923 / NRRL Y-1056)</name>
    <name type="common">Yeast</name>
    <name type="synonym">Ashbya gossypii</name>
    <dbReference type="NCBI Taxonomy" id="284811"/>
    <lineage>
        <taxon>Eukaryota</taxon>
        <taxon>Fungi</taxon>
        <taxon>Dikarya</taxon>
        <taxon>Ascomycota</taxon>
        <taxon>Saccharomycotina</taxon>
        <taxon>Saccharomycetes</taxon>
        <taxon>Saccharomycetales</taxon>
        <taxon>Saccharomycetaceae</taxon>
        <taxon>Eremothecium</taxon>
    </lineage>
</organism>
<proteinExistence type="inferred from homology"/>
<name>CSR1_EREGS</name>